<protein>
    <recommendedName>
        <fullName>E3 ubiquitin-protein ligase synoviolin</fullName>
        <ecNumber evidence="6 7 8 13 14 15">2.3.2.27</ecNumber>
    </recommendedName>
    <alternativeName>
        <fullName evidence="29">RING-type E3 ubiquitin transferase synoviolin</fullName>
    </alternativeName>
    <alternativeName>
        <fullName>Synovial apoptosis inhibitor 1</fullName>
    </alternativeName>
</protein>
<feature type="chain" id="PRO_0000280548" description="E3 ubiquitin-protein ligase synoviolin">
    <location>
        <begin position="1"/>
        <end position="617"/>
    </location>
</feature>
<feature type="topological domain" description="Cytoplasmic" evidence="34">
    <location>
        <begin position="1"/>
        <end position="4"/>
    </location>
</feature>
<feature type="transmembrane region" description="Helical" evidence="2">
    <location>
        <begin position="5"/>
        <end position="25"/>
    </location>
</feature>
<feature type="topological domain" description="Lumenal" evidence="34">
    <location>
        <begin position="26"/>
        <end position="41"/>
    </location>
</feature>
<feature type="transmembrane region" description="Helical" evidence="2">
    <location>
        <begin position="42"/>
        <end position="62"/>
    </location>
</feature>
<feature type="topological domain" description="Cytoplasmic" evidence="34">
    <location>
        <begin position="63"/>
        <end position="98"/>
    </location>
</feature>
<feature type="transmembrane region" description="Helical" evidence="2">
    <location>
        <begin position="99"/>
        <end position="119"/>
    </location>
</feature>
<feature type="topological domain" description="Lumenal" evidence="34">
    <location>
        <begin position="120"/>
        <end position="140"/>
    </location>
</feature>
<feature type="transmembrane region" description="Helical" evidence="2">
    <location>
        <begin position="141"/>
        <end position="161"/>
    </location>
</feature>
<feature type="topological domain" description="Cytoplasmic" evidence="34">
    <location>
        <begin position="162"/>
        <end position="169"/>
    </location>
</feature>
<feature type="transmembrane region" description="Helical" evidence="2">
    <location>
        <begin position="170"/>
        <end position="190"/>
    </location>
</feature>
<feature type="topological domain" description="Lumenal" evidence="34">
    <location>
        <begin position="191"/>
        <end position="224"/>
    </location>
</feature>
<feature type="transmembrane region" description="Helical" evidence="2">
    <location>
        <begin position="225"/>
        <end position="245"/>
    </location>
</feature>
<feature type="topological domain" description="Cytoplasmic" evidence="34">
    <location>
        <begin position="246"/>
        <end position="617"/>
    </location>
</feature>
<feature type="zinc finger region" description="RING-type; atypical" evidence="3">
    <location>
        <begin position="291"/>
        <end position="330"/>
    </location>
</feature>
<feature type="region of interest" description="Involved in FAM8A1 interaction" evidence="23">
    <location>
        <begin position="1"/>
        <end position="251"/>
    </location>
</feature>
<feature type="region of interest" description="Necessary and sufficient for SEL1L interaction" evidence="23">
    <location>
        <begin position="1"/>
        <end position="84"/>
    </location>
</feature>
<feature type="region of interest" description="Interaction with p53/TP53" evidence="15">
    <location>
        <begin position="236"/>
        <end position="270"/>
    </location>
</feature>
<feature type="region of interest" description="Disordered" evidence="4">
    <location>
        <begin position="337"/>
        <end position="375"/>
    </location>
</feature>
<feature type="region of interest" description="Disordered" evidence="4">
    <location>
        <begin position="393"/>
        <end position="453"/>
    </location>
</feature>
<feature type="region of interest" description="HAF-H domain; necessary to form higher-order Hrd1 complexes" evidence="33">
    <location>
        <begin position="480"/>
        <end position="535"/>
    </location>
</feature>
<feature type="region of interest" description="Disordered" evidence="4">
    <location>
        <begin position="535"/>
        <end position="617"/>
    </location>
</feature>
<feature type="compositionally biased region" description="Pro residues" evidence="4">
    <location>
        <begin position="341"/>
        <end position="375"/>
    </location>
</feature>
<feature type="compositionally biased region" description="Low complexity" evidence="4">
    <location>
        <begin position="417"/>
        <end position="451"/>
    </location>
</feature>
<feature type="compositionally biased region" description="Low complexity" evidence="4">
    <location>
        <begin position="537"/>
        <end position="569"/>
    </location>
</feature>
<feature type="compositionally biased region" description="Acidic residues" evidence="4">
    <location>
        <begin position="591"/>
        <end position="600"/>
    </location>
</feature>
<feature type="binding site" evidence="25 35">
    <location>
        <position position="291"/>
    </location>
    <ligand>
        <name>Zn(2+)</name>
        <dbReference type="ChEBI" id="CHEBI:29105"/>
        <label>1</label>
    </ligand>
</feature>
<feature type="binding site" evidence="25 35">
    <location>
        <position position="294"/>
    </location>
    <ligand>
        <name>Zn(2+)</name>
        <dbReference type="ChEBI" id="CHEBI:29105"/>
        <label>1</label>
    </ligand>
</feature>
<feature type="binding site" evidence="25 35">
    <location>
        <position position="307"/>
    </location>
    <ligand>
        <name>Zn(2+)</name>
        <dbReference type="ChEBI" id="CHEBI:29105"/>
        <label>2</label>
    </ligand>
</feature>
<feature type="binding site" evidence="25 35">
    <location>
        <position position="309"/>
    </location>
    <ligand>
        <name>Zn(2+)</name>
        <dbReference type="ChEBI" id="CHEBI:29105"/>
        <label>2</label>
    </ligand>
</feature>
<feature type="binding site" evidence="25 35">
    <location>
        <position position="312"/>
    </location>
    <ligand>
        <name>Zn(2+)</name>
        <dbReference type="ChEBI" id="CHEBI:29105"/>
        <label>1</label>
    </ligand>
</feature>
<feature type="binding site" evidence="25 35">
    <location>
        <position position="315"/>
    </location>
    <ligand>
        <name>Zn(2+)</name>
        <dbReference type="ChEBI" id="CHEBI:29105"/>
        <label>1</label>
    </ligand>
</feature>
<feature type="binding site" evidence="25 35">
    <location>
        <position position="326"/>
    </location>
    <ligand>
        <name>Zn(2+)</name>
        <dbReference type="ChEBI" id="CHEBI:29105"/>
        <label>2</label>
    </ligand>
</feature>
<feature type="binding site" evidence="25 35">
    <location>
        <position position="329"/>
    </location>
    <ligand>
        <name>Zn(2+)</name>
        <dbReference type="ChEBI" id="CHEBI:29105"/>
        <label>2</label>
    </ligand>
</feature>
<feature type="modified residue" description="Phosphoserine" evidence="36 37 38">
    <location>
        <position position="613"/>
    </location>
</feature>
<feature type="splice variant" id="VSP_023777" description="In isoform 2." evidence="27">
    <location>
        <begin position="127"/>
        <end position="177"/>
    </location>
</feature>
<feature type="splice variant" id="VSP_023778" description="In isoform 2 and isoform 3." evidence="27 28 30 32">
    <location>
        <position position="411"/>
    </location>
</feature>
<feature type="sequence variant" id="VAR_090404" description="Found in a patient with a neurodevelopmental disorder; uncertain significance; results in decreased protein ubiquitination of misfolded substrates and impaired ER-associated protein degradation." evidence="26">
    <original>P</original>
    <variation>L</variation>
    <location>
        <position position="398"/>
    </location>
</feature>
<feature type="mutagenesis site" description="No effect on interaction with FAM8A1, HERPUD1, OS9, SEL1L and UBE2J1." evidence="23">
    <original>C</original>
    <variation>A</variation>
    <location>
        <position position="294"/>
    </location>
</feature>
<feature type="mutagenesis site" description="Decreased 'Lys-48'-linked ubiquitination." evidence="22">
    <original>C</original>
    <variation>S</variation>
    <location>
        <position position="315"/>
    </location>
</feature>
<feature type="mutagenesis site" description="Abolishes E3 ligase activity." evidence="5">
    <original>C</original>
    <variation>S</variation>
    <location>
        <position position="329"/>
    </location>
</feature>
<feature type="mutagenesis site" description="Loss of interaction with FAM8A1, HERPUD1, OS9 and UBE2J1, impaired degradation of immature core-glycosylated basigin/CD147." evidence="23">
    <original>R</original>
    <variation>L</variation>
    <location>
        <position position="503"/>
    </location>
</feature>
<feature type="sequence conflict" description="In Ref. 1; BAC24801 and 4; AAL26903." evidence="34" ref="1 4">
    <original>M</original>
    <variation>I</variation>
    <location>
        <position position="145"/>
    </location>
</feature>
<feature type="sequence conflict" description="In Ref. 3; BAC57449." evidence="34" ref="3">
    <original>E</original>
    <variation>G</variation>
    <location>
        <position position="545"/>
    </location>
</feature>
<feature type="helix" evidence="39">
    <location>
        <begin position="281"/>
        <end position="285"/>
    </location>
</feature>
<feature type="turn" evidence="39">
    <location>
        <begin position="286"/>
        <end position="289"/>
    </location>
</feature>
<feature type="turn" evidence="39">
    <location>
        <begin position="292"/>
        <end position="295"/>
    </location>
</feature>
<feature type="strand" evidence="39">
    <location>
        <begin position="299"/>
        <end position="304"/>
    </location>
</feature>
<feature type="strand" evidence="39">
    <location>
        <begin position="310"/>
        <end position="312"/>
    </location>
</feature>
<feature type="helix" evidence="39">
    <location>
        <begin position="313"/>
        <end position="319"/>
    </location>
</feature>
<feature type="turn" evidence="39">
    <location>
        <begin position="320"/>
        <end position="322"/>
    </location>
</feature>
<feature type="turn" evidence="39">
    <location>
        <begin position="327"/>
        <end position="329"/>
    </location>
</feature>
<gene>
    <name evidence="31" type="primary">SYVN1</name>
    <name evidence="28 30 31" type="synonym">HRD1</name>
    <name evidence="27 31" type="synonym">KIAA1810</name>
</gene>
<sequence length="617" mass="67685">MFRTAVMMAASLALTGAVVAHAYYLKHQFYPTVVYLTKSSPSMAVLYIQAFVLVFLLGKVMGKVFFGQLRAAEMEHLLERSWYAVTETCLAFTVFRDDFSPRFVALFTLLLFLKCFHWLAEDRVDFMERSPNISWLFHCRIVSLMFLLGILDFLFVSHAYHSILTRGASVQLVFGFEYAILMTMVLTIFIKYVLHSVDLQSENPWDNKAVYMLYTELFTGFIKVLLYMAFMTIMIKVHTFPLFAIRPMYLAMRQFKKAVTDAIMSRRAIRNMNTLYPDATPEELQAMDNVCIICREEMVTGAKRLPCNHIFHTSCLRSWFQRQQTCPTCRMDVLRASLPAQSPPPPEPADQGPPPAPHPPPLLPQPPNFPQGLLPPFPPGMFPLWPPMGPFPPVPPPPSSGEAVAPPSTSAAALSRPSGAATTTAAGTSATAASATASGPGSGSAPEAGPAPGFPFPPPWMGMPLPPPFAFPPMPVPPAGFAGLTPEELRALEGHERQHLEARLQSLRNIHTLLDAAMLQINQYLTVLASLGPPRPATSVNSTEETATTVVAAASSTSIPSSEATTPTPGASPPAPEMERPPAPESVGTEEMPEDGEPDAAELRRRRLQKLESPVAH</sequence>
<name>SYVN1_HUMAN</name>
<organism>
    <name type="scientific">Homo sapiens</name>
    <name type="common">Human</name>
    <dbReference type="NCBI Taxonomy" id="9606"/>
    <lineage>
        <taxon>Eukaryota</taxon>
        <taxon>Metazoa</taxon>
        <taxon>Chordata</taxon>
        <taxon>Craniata</taxon>
        <taxon>Vertebrata</taxon>
        <taxon>Euteleostomi</taxon>
        <taxon>Mammalia</taxon>
        <taxon>Eutheria</taxon>
        <taxon>Euarchontoglires</taxon>
        <taxon>Primates</taxon>
        <taxon>Haplorrhini</taxon>
        <taxon>Catarrhini</taxon>
        <taxon>Hominidae</taxon>
        <taxon>Homo</taxon>
    </lineage>
</organism>
<reference key="1">
    <citation type="journal article" date="2002" name="FEBS Lett.">
        <title>Human HRD1 protects against ER stress-induced apoptosis through ER-associated degradation.</title>
        <authorList>
            <person name="Kaneko M."/>
            <person name="Ishiguro M."/>
            <person name="Niinuma Y."/>
            <person name="Uesugi M."/>
            <person name="Nomura Y."/>
        </authorList>
    </citation>
    <scope>NUCLEOTIDE SEQUENCE [MRNA] (ISOFORM 3)</scope>
    <scope>FUNCTION</scope>
    <scope>TISSUE SPECIFICITY</scope>
    <scope>SUBCELLULAR LOCATION</scope>
    <scope>MUTAGENESIS OF CYS-329</scope>
    <scope>INDUCTION BY ER STRESS</scope>
    <scope>AUTOUBIQUITINATION</scope>
    <scope>PATHWAY</scope>
</reference>
<reference key="2">
    <citation type="journal article" date="2003" name="Biochem. Biophys. Res. Commun.">
        <title>A novel mammalian endoplasmic reticulum ubiquitin ligase homologous to the yeast Hrd1.</title>
        <authorList>
            <person name="Nadav E."/>
            <person name="Shmueli A."/>
            <person name="Barr H."/>
            <person name="Gonen H."/>
            <person name="Ciechanover A."/>
            <person name="Reiss Y."/>
        </authorList>
    </citation>
    <scope>NUCLEOTIDE SEQUENCE [MRNA] (ISOFORM 1)</scope>
    <scope>FUNCTION</scope>
    <scope>TISSUE SPECIFICITY</scope>
    <scope>SUBCELLULAR LOCATION</scope>
    <scope>AUTOUBIQUITINATION</scope>
    <scope>CATALYTIC ACTIVITY</scope>
</reference>
<reference key="3">
    <citation type="journal article" date="2003" name="Genes Dev.">
        <title>Synoviolin/Hrd1, an E3 ubiquitin ligase, as a novel pathogenic factor for arthropathy.</title>
        <authorList>
            <person name="Amano T."/>
            <person name="Yamasaki S."/>
            <person name="Yagishita N."/>
            <person name="Tsuchimochi K."/>
            <person name="Shin H."/>
            <person name="Kawahara K."/>
            <person name="Aratani S."/>
            <person name="Fujita H."/>
            <person name="Zhang L."/>
            <person name="Ikeda R."/>
            <person name="Fujii R."/>
            <person name="Miura N."/>
            <person name="Komiya S."/>
            <person name="Nishioka K."/>
            <person name="Maruyama I."/>
            <person name="Fukamizu A."/>
            <person name="Nakajima T."/>
        </authorList>
    </citation>
    <scope>NUCLEOTIDE SEQUENCE [MRNA] (ISOFORM 1)</scope>
    <scope>FUNCTION</scope>
    <scope>TISSUE SPECIFICITY</scope>
    <scope>AUTOUBIQUITINATION</scope>
    <scope>CATALYTIC ACTIVITY</scope>
    <source>
        <tissue>Articular cartilage</tissue>
    </source>
</reference>
<reference key="4">
    <citation type="journal article" date="2004" name="J. Biol. Chem.">
        <title>Human HRD1 is an E3 ubiquitin ligase involved in degradation of proteins from the endoplasmic reticulum.</title>
        <authorList>
            <person name="Kikkert M."/>
            <person name="Doolman R."/>
            <person name="Dai M."/>
            <person name="Avner R."/>
            <person name="Hassink G."/>
            <person name="van Voorden S."/>
            <person name="Thanedar S."/>
            <person name="Roitelman J."/>
            <person name="Chau V."/>
            <person name="Wiertz E."/>
        </authorList>
    </citation>
    <scope>NUCLEOTIDE SEQUENCE [MRNA] (ISOFORM 3)</scope>
    <scope>FUNCTION</scope>
    <scope>INDUCTION BY ER STRESS</scope>
    <scope>LACK OF GLYCOSYLATION</scope>
    <scope>SUBCELLULAR LOCATION</scope>
    <scope>TOPOLOGY</scope>
    <scope>CATALYTIC ACTIVITY</scope>
</reference>
<reference key="5">
    <citation type="journal article" date="2001" name="DNA Res.">
        <title>Prediction of the coding sequences of unidentified human genes. XX. The complete sequences of 100 new cDNA clones from brain which code for large proteins in vitro.</title>
        <authorList>
            <person name="Nagase T."/>
            <person name="Nakayama M."/>
            <person name="Nakajima D."/>
            <person name="Kikuno R."/>
            <person name="Ohara O."/>
        </authorList>
    </citation>
    <scope>NUCLEOTIDE SEQUENCE [LARGE SCALE MRNA] (ISOFORM 2)</scope>
    <source>
        <tissue>Brain</tissue>
    </source>
</reference>
<reference key="6">
    <citation type="journal article" date="2007" name="BMC Genomics">
        <title>The full-ORF clone resource of the German cDNA consortium.</title>
        <authorList>
            <person name="Bechtel S."/>
            <person name="Rosenfelder H."/>
            <person name="Duda A."/>
            <person name="Schmidt C.P."/>
            <person name="Ernst U."/>
            <person name="Wellenreuther R."/>
            <person name="Mehrle A."/>
            <person name="Schuster C."/>
            <person name="Bahr A."/>
            <person name="Bloecker H."/>
            <person name="Heubner D."/>
            <person name="Hoerlein A."/>
            <person name="Michel G."/>
            <person name="Wedler H."/>
            <person name="Koehrer K."/>
            <person name="Ottenwaelder B."/>
            <person name="Poustka A."/>
            <person name="Wiemann S."/>
            <person name="Schupp I."/>
        </authorList>
    </citation>
    <scope>NUCLEOTIDE SEQUENCE [LARGE SCALE MRNA] (ISOFORM 3)</scope>
    <source>
        <tissue>Amygdala</tissue>
    </source>
</reference>
<reference key="7">
    <citation type="journal article" date="2004" name="Genome Res.">
        <title>The status, quality, and expansion of the NIH full-length cDNA project: the Mammalian Gene Collection (MGC).</title>
        <authorList>
            <consortium name="The MGC Project Team"/>
        </authorList>
    </citation>
    <scope>NUCLEOTIDE SEQUENCE [LARGE SCALE MRNA] (ISOFORM 1)</scope>
    <source>
        <tissue>Blood</tissue>
    </source>
</reference>
<reference key="8">
    <citation type="journal article" date="2005" name="J. Mol. Biol.">
        <title>The ubiquitin-domain protein HERP forms a complex with components of the endoplasmic reticulum associated degradation pathway.</title>
        <authorList>
            <person name="Schulze A."/>
            <person name="Standera S."/>
            <person name="Buerger E."/>
            <person name="Kikkert M."/>
            <person name="van Voorden S."/>
            <person name="Wiertz E."/>
            <person name="Koning F."/>
            <person name="Kloetzel P.-M."/>
            <person name="Seeger M."/>
        </authorList>
    </citation>
    <scope>FUNCTION</scope>
    <scope>HOMODIMERIZATION</scope>
    <scope>INTERACTION WITH VCP; HERPUD1 AND DERL1</scope>
    <scope>IDENTIFICATION IN A COMPLEX WITH HERPUD1; VIMP AND DERL1</scope>
    <scope>PATHWAY</scope>
</reference>
<reference key="9">
    <citation type="journal article" date="2005" name="Proc. Natl. Acad. Sci. U.S.A.">
        <title>Recruitment of the p97 ATPase and ubiquitin ligases to the site of retrotranslocation at the endoplasmic reticulum membrane.</title>
        <authorList>
            <person name="Ye Y."/>
            <person name="Shibata Y."/>
            <person name="Kikkert M."/>
            <person name="van Voorden S."/>
            <person name="Wiertz E."/>
            <person name="Rapoport T.A."/>
        </authorList>
    </citation>
    <scope>INTERACTION WITH VCP</scope>
    <scope>SUBCELLULAR LOCATION</scope>
</reference>
<reference key="10">
    <citation type="journal article" date="2005" name="Proc. Natl. Acad. Sci. U.S.A.">
        <title>Multiprotein complexes that link dislocation, ubiquitination, and extraction of misfolded proteins from the endoplasmic reticulum membrane.</title>
        <authorList>
            <person name="Lilley B.N."/>
            <person name="Ploegh H.L."/>
        </authorList>
    </citation>
    <scope>IDENTIFICATION IN A COMPLEX WITH DERL2 AND SEL1L</scope>
    <scope>INTERACTION WITH SEL1L</scope>
</reference>
<reference key="11">
    <citation type="journal article" date="2006" name="J. Neurochem.">
        <title>A ubiquitin ligase HRD1 promotes the degradation of Pael receptor, a substrate of Parkin.</title>
        <authorList>
            <person name="Omura T."/>
            <person name="Kaneko M."/>
            <person name="Okuma Y."/>
            <person name="Orba Y."/>
            <person name="Nagashima K."/>
            <person name="Takahashi R."/>
            <person name="Fujitani N."/>
            <person name="Matsumura S."/>
            <person name="Hata A."/>
            <person name="Kubota K."/>
            <person name="Murahashi K."/>
            <person name="Uehara T."/>
            <person name="Nomura Y."/>
        </authorList>
    </citation>
    <scope>FUNCTION</scope>
    <scope>PATHWAY</scope>
    <scope>CATALYTIC ACTIVITY</scope>
</reference>
<reference key="12">
    <citation type="journal article" date="2006" name="Proc. Natl. Acad. Sci. U.S.A.">
        <title>An amphipathic helix targets serum and glucocorticoid-induced kinase 1 to the endoplasmic reticulum-associated ubiquitin-conjugation machinery.</title>
        <authorList>
            <person name="Arteaga M.F."/>
            <person name="Wang L."/>
            <person name="Ravid T."/>
            <person name="Hochstrasser M."/>
            <person name="Canessa C.M."/>
        </authorList>
    </citation>
    <scope>FUNCTION</scope>
    <scope>PATHWAY</scope>
</reference>
<reference key="13">
    <citation type="journal article" date="2007" name="EMBO J.">
        <title>Cytoplasmic destruction of p53 by the endoplasmic reticulum-resident ubiquitin ligase 'Synoviolin'.</title>
        <authorList>
            <person name="Yamasaki S."/>
            <person name="Yagishita N."/>
            <person name="Sasaki T."/>
            <person name="Nakazawa M."/>
            <person name="Kato Y."/>
            <person name="Yamadera T."/>
            <person name="Bae E."/>
            <person name="Toriyama S."/>
            <person name="Ikeda R."/>
            <person name="Zhang L."/>
            <person name="Fujitani K."/>
            <person name="Yoo E."/>
            <person name="Tsuchimochi K."/>
            <person name="Ohta T."/>
            <person name="Araya N."/>
            <person name="Fujita H."/>
            <person name="Aratani S."/>
            <person name="Eguchi K."/>
            <person name="Komiya S."/>
            <person name="Maruyama I."/>
            <person name="Higashi N."/>
            <person name="Sato M."/>
            <person name="Senoo H."/>
            <person name="Ochi T."/>
            <person name="Yokoyama S."/>
            <person name="Amano T."/>
            <person name="Kim J."/>
            <person name="Gay S."/>
            <person name="Fukamizu A."/>
            <person name="Nishioka K."/>
            <person name="Tanaka K."/>
            <person name="Nakajima T."/>
        </authorList>
    </citation>
    <scope>FUNCTION</scope>
    <scope>INTERACTION WITH TP53</scope>
    <scope>CATALYTIC ACTIVITY</scope>
</reference>
<reference key="14">
    <citation type="journal article" date="2007" name="Exp. Cell Res.">
        <title>Ubiquitin ligase Hrd1 enhances the degradation and suppresses the toxicity of polyglutamine-expanded huntingtin.</title>
        <authorList>
            <person name="Yang H."/>
            <person name="Zhong X."/>
            <person name="Ballar P."/>
            <person name="Luo S."/>
            <person name="Shen Y."/>
            <person name="Rubinsztein D.C."/>
            <person name="Monteiro M.J."/>
            <person name="Fang S."/>
        </authorList>
    </citation>
    <scope>FUNCTION</scope>
    <scope>INTERACTION WITH HTT</scope>
    <scope>CATALYTIC ACTIVITY</scope>
</reference>
<reference key="15">
    <citation type="journal article" date="2008" name="Int. J. Biochem. Cell Biol.">
        <title>Ubxd1 is a novel co-factor of the human p97 ATPase.</title>
        <authorList>
            <person name="Madsen L."/>
            <person name="Andersen K.M."/>
            <person name="Prag S."/>
            <person name="Moos T."/>
            <person name="Semple C.A."/>
            <person name="Seeger M."/>
            <person name="Hartmann-Petersen R."/>
        </authorList>
    </citation>
    <scope>INTERACTION WITH UBXN6</scope>
</reference>
<reference key="16">
    <citation type="journal article" date="2008" name="J. Biol. Chem.">
        <title>Human XTP3-B forms an endoplasmic reticulum quality control scaffold with the HRD1-SEL1L ubiquitin ligase complex and BiP.</title>
        <authorList>
            <person name="Hosokawa N."/>
            <person name="Wada I."/>
            <person name="Nagasawa K."/>
            <person name="Moriyama T."/>
            <person name="Okawa K."/>
            <person name="Nagata K."/>
        </authorList>
    </citation>
    <scope>INTERACTION WITH ERLEC1; HSPA5; OS9 AND SEL1L</scope>
</reference>
<reference key="17">
    <citation type="journal article" date="2008" name="Mol. Cell">
        <title>Kinase-selective enrichment enables quantitative phosphoproteomics of the kinome across the cell cycle.</title>
        <authorList>
            <person name="Daub H."/>
            <person name="Olsen J.V."/>
            <person name="Bairlein M."/>
            <person name="Gnad F."/>
            <person name="Oppermann F.S."/>
            <person name="Korner R."/>
            <person name="Greff Z."/>
            <person name="Keri G."/>
            <person name="Stemmann O."/>
            <person name="Mann M."/>
        </authorList>
    </citation>
    <scope>PHOSPHORYLATION [LARGE SCALE ANALYSIS] AT SER-613</scope>
    <scope>IDENTIFICATION BY MASS SPECTROMETRY [LARGE SCALE ANALYSIS]</scope>
    <source>
        <tissue>Cervix carcinoma</tissue>
    </source>
</reference>
<reference key="18">
    <citation type="journal article" date="2008" name="Nat. Cell Biol.">
        <title>OS-9 and GRP94 deliver mutant alpha1-antitrypsin to the Hrd1-SEL1L ubiquitin ligase complex for ERAD.</title>
        <authorList>
            <person name="Christianson J.C."/>
            <person name="Shaler T.A."/>
            <person name="Tyler R.E."/>
            <person name="Kopito R.R."/>
        </authorList>
    </citation>
    <scope>INTERACTION WITH ERLEC1; OS9 AND SEL1L</scope>
</reference>
<reference key="19">
    <citation type="journal article" date="2008" name="Proc. Natl. Acad. Sci. U.S.A.">
        <title>A quantitative atlas of mitotic phosphorylation.</title>
        <authorList>
            <person name="Dephoure N."/>
            <person name="Zhou C."/>
            <person name="Villen J."/>
            <person name="Beausoleil S.A."/>
            <person name="Bakalarski C.E."/>
            <person name="Elledge S.J."/>
            <person name="Gygi S.P."/>
        </authorList>
    </citation>
    <scope>IDENTIFICATION BY MASS SPECTROMETRY [LARGE SCALE ANALYSIS]</scope>
    <source>
        <tissue>Cervix carcinoma</tissue>
    </source>
</reference>
<reference key="20">
    <citation type="journal article" date="2010" name="Sci. Signal.">
        <title>Quantitative phosphoproteomics reveals widespread full phosphorylation site occupancy during mitosis.</title>
        <authorList>
            <person name="Olsen J.V."/>
            <person name="Vermeulen M."/>
            <person name="Santamaria A."/>
            <person name="Kumar C."/>
            <person name="Miller M.L."/>
            <person name="Jensen L.J."/>
            <person name="Gnad F."/>
            <person name="Cox J."/>
            <person name="Jensen T.S."/>
            <person name="Nigg E.A."/>
            <person name="Brunak S."/>
            <person name="Mann M."/>
        </authorList>
    </citation>
    <scope>PHOSPHORYLATION [LARGE SCALE ANALYSIS] AT SER-613</scope>
    <scope>IDENTIFICATION BY MASS SPECTROMETRY [LARGE SCALE ANALYSIS]</scope>
    <source>
        <tissue>Cervix carcinoma</tissue>
    </source>
</reference>
<reference key="21">
    <citation type="journal article" date="2011" name="BMC Syst. Biol.">
        <title>Initial characterization of the human central proteome.</title>
        <authorList>
            <person name="Burkard T.R."/>
            <person name="Planyavsky M."/>
            <person name="Kaupe I."/>
            <person name="Breitwieser F.P."/>
            <person name="Buerckstuemmer T."/>
            <person name="Bennett K.L."/>
            <person name="Superti-Furga G."/>
            <person name="Colinge J."/>
        </authorList>
    </citation>
    <scope>IDENTIFICATION BY MASS SPECTROMETRY [LARGE SCALE ANALYSIS]</scope>
</reference>
<reference key="22">
    <citation type="journal article" date="2011" name="Mol. Cell">
        <title>A ubiquitin ligase-associated chaperone holdase maintains polypeptides in soluble states for proteasome degradation.</title>
        <authorList>
            <person name="Wang Q."/>
            <person name="Liu Y."/>
            <person name="Soetandyo N."/>
            <person name="Baek K."/>
            <person name="Hegde R."/>
            <person name="Ye Y."/>
        </authorList>
    </citation>
    <scope>INTERACTION WITH BAG6</scope>
</reference>
<reference key="23">
    <citation type="journal article" date="2012" name="Mol. Cell">
        <title>STT3B-dependent posttranslational N-glycosylation as a surveillance system for secretory protein.</title>
        <authorList>
            <person name="Sato T."/>
            <person name="Sako Y."/>
            <person name="Sho M."/>
            <person name="Momohara M."/>
            <person name="Suico M.A."/>
            <person name="Shuto T."/>
            <person name="Nishitoh H."/>
            <person name="Okiyoneda T."/>
            <person name="Kokame K."/>
            <person name="Kaneko M."/>
            <person name="Taura M."/>
            <person name="Miyata M."/>
            <person name="Chosa K."/>
            <person name="Koga T."/>
            <person name="Morino-Koga S."/>
            <person name="Wada I."/>
            <person name="Kai H."/>
        </authorList>
    </citation>
    <scope>FUNCTION IN ERAD PATHWAY</scope>
    <scope>PATHWAY</scope>
</reference>
<reference key="24">
    <citation type="journal article" date="2013" name="J. Proteome Res.">
        <title>Toward a comprehensive characterization of a human cancer cell phosphoproteome.</title>
        <authorList>
            <person name="Zhou H."/>
            <person name="Di Palma S."/>
            <person name="Preisinger C."/>
            <person name="Peng M."/>
            <person name="Polat A.N."/>
            <person name="Heck A.J."/>
            <person name="Mohammed S."/>
        </authorList>
    </citation>
    <scope>PHOSPHORYLATION [LARGE SCALE ANALYSIS] AT SER-613</scope>
    <scope>IDENTIFICATION BY MASS SPECTROMETRY [LARGE SCALE ANALYSIS]</scope>
    <source>
        <tissue>Cervix carcinoma</tissue>
        <tissue>Erythroleukemia</tissue>
    </source>
</reference>
<reference key="25">
    <citation type="journal article" date="2014" name="J. Proteomics">
        <title>An enzyme assisted RP-RPLC approach for in-depth analysis of human liver phosphoproteome.</title>
        <authorList>
            <person name="Bian Y."/>
            <person name="Song C."/>
            <person name="Cheng K."/>
            <person name="Dong M."/>
            <person name="Wang F."/>
            <person name="Huang J."/>
            <person name="Sun D."/>
            <person name="Wang L."/>
            <person name="Ye M."/>
            <person name="Zou H."/>
        </authorList>
    </citation>
    <scope>IDENTIFICATION BY MASS SPECTROMETRY [LARGE SCALE ANALYSIS]</scope>
    <source>
        <tissue>Liver</tissue>
    </source>
</reference>
<reference key="26">
    <citation type="journal article" date="2016" name="Int. J. Mol. Sci.">
        <title>USP19-Mediated Deubiquitination Facilitates the Stabilization of HRD1 Ubiquitin Ligase.</title>
        <authorList>
            <person name="Harada K."/>
            <person name="Kato M."/>
            <person name="Nakamura N."/>
        </authorList>
    </citation>
    <scope>FUNCTION</scope>
    <scope>DEUBIQUITINATED BY USP19</scope>
    <scope>MUTAGENESIS OF CYS-315</scope>
</reference>
<reference key="27">
    <citation type="journal article" date="2016" name="FEBS J.">
        <title>Association of the SEL1L protein transmembrane domain with HRD1 ubiquitin ligase regulates ERAD-L.</title>
        <authorList>
            <person name="Hosokawa N."/>
            <person name="Wada I."/>
        </authorList>
    </citation>
    <scope>FUNCTION</scope>
    <scope>INTERACTION WITH SEL1L</scope>
    <scope>SUBCELLULAR LOCATION</scope>
    <scope>PATHWAY</scope>
</reference>
<reference key="28">
    <citation type="journal article" date="2017" name="J. Cell Sci.">
        <title>Conserved cytoplasmic domains promote Hrd1 ubiquitin ligase complex formation for ER-associated degradation (ERAD).</title>
        <authorList>
            <person name="Schulz J."/>
            <person name="Avci D."/>
            <person name="Queisser M.A."/>
            <person name="Gutschmidt A."/>
            <person name="Dreher L.S."/>
            <person name="Fenech E.J."/>
            <person name="Volkmar N."/>
            <person name="Hayashi Y."/>
            <person name="Hoppe T."/>
            <person name="Christianson J.C."/>
        </authorList>
    </citation>
    <scope>FUNCTION</scope>
    <scope>IDENTIFICATION IN THE HRD1 COMPLEX</scope>
    <scope>MUTAGENESIS OF CYS-294 AND ARG-503</scope>
</reference>
<reference key="29">
    <citation type="journal article" date="2017" name="Nat. Commun.">
        <title>HSP70-Hrd1 axis precludes the oncorepressor potential of N-terminal misfolded Blimp-1s in lymphoma cells.</title>
        <authorList>
            <person name="Wang W.F."/>
            <person name="Yan L."/>
            <person name="Liu Z."/>
            <person name="Liu L.X."/>
            <person name="Lin J."/>
            <person name="Liu Z.Y."/>
            <person name="Chen X.P."/>
            <person name="Zhang W."/>
            <person name="Xu Z.Z."/>
            <person name="Shi T."/>
            <person name="Li J.M."/>
            <person name="Zhao Y.L."/>
            <person name="Meng G."/>
            <person name="Xia Y."/>
            <person name="Li J.Y."/>
            <person name="Zhu J."/>
        </authorList>
    </citation>
    <scope>FUNCTION</scope>
    <scope>INVOLVEMENT IN ABC-DLBCL</scope>
</reference>
<reference key="30">
    <citation type="journal article" date="2024" name="J. Clin. Invest.">
        <title>Hypomorphic variants of SEL1L-HRD1 ER-associated degradation are associated with neurodevelopmental disorders.</title>
        <authorList>
            <person name="Wang H.H."/>
            <person name="Lin L.L."/>
            <person name="Li Z.J."/>
            <person name="Wei X."/>
            <person name="Askander O."/>
            <person name="Cappuccio G."/>
            <person name="Hashem M.O."/>
            <person name="Hubert L."/>
            <person name="Munnich A."/>
            <person name="Alqahtani M."/>
            <person name="Pang Q."/>
            <person name="Burmeister M."/>
            <person name="Lu Y."/>
            <person name="Poirier K."/>
            <person name="Besmond C."/>
            <person name="Sun S."/>
            <person name="Brunetti-Pierri N."/>
            <person name="Alkuraya F.S."/>
            <person name="Qi L."/>
        </authorList>
    </citation>
    <scope>VARIANT LEU-398</scope>
    <scope>CHARACTERIZATION OF VARIANT LEU-398</scope>
    <scope>INTERACTION WITH SEL1L</scope>
</reference>
<reference evidence="35" key="31">
    <citation type="journal article" date="2019" name="Protein Sci.">
        <title>Unique RING finger structure from the human HRD1 protein.</title>
        <authorList>
            <person name="Miyamoto K."/>
            <person name="Taguchi Y."/>
            <person name="Saito K."/>
        </authorList>
    </citation>
    <scope>STRUCTURE BY NMR OF 279-334 IN COMPLEX WITH ZINC</scope>
</reference>
<keyword id="KW-0002">3D-structure</keyword>
<keyword id="KW-0025">Alternative splicing</keyword>
<keyword id="KW-0256">Endoplasmic reticulum</keyword>
<keyword id="KW-0472">Membrane</keyword>
<keyword id="KW-0479">Metal-binding</keyword>
<keyword id="KW-0597">Phosphoprotein</keyword>
<keyword id="KW-1267">Proteomics identification</keyword>
<keyword id="KW-1185">Reference proteome</keyword>
<keyword id="KW-0346">Stress response</keyword>
<keyword id="KW-0808">Transferase</keyword>
<keyword id="KW-0812">Transmembrane</keyword>
<keyword id="KW-1133">Transmembrane helix</keyword>
<keyword id="KW-0832">Ubl conjugation</keyword>
<keyword id="KW-0833">Ubl conjugation pathway</keyword>
<keyword id="KW-0862">Zinc</keyword>
<keyword id="KW-0863">Zinc-finger</keyword>
<accession>Q86TM6</accession>
<accession>Q8N3K3</accession>
<accession>Q8N6E8</accession>
<accession>Q96JL5</accession>
<accession>Q96PK3</accession>
<evidence type="ECO:0000250" key="1">
    <source>
        <dbReference type="UniProtKB" id="Q9DBY1"/>
    </source>
</evidence>
<evidence type="ECO:0000255" key="2"/>
<evidence type="ECO:0000255" key="3">
    <source>
        <dbReference type="PROSITE-ProRule" id="PRU00175"/>
    </source>
</evidence>
<evidence type="ECO:0000256" key="4">
    <source>
        <dbReference type="SAM" id="MobiDB-lite"/>
    </source>
</evidence>
<evidence type="ECO:0000269" key="5">
    <source>
    </source>
</evidence>
<evidence type="ECO:0000269" key="6">
    <source>
    </source>
</evidence>
<evidence type="ECO:0000269" key="7">
    <source>
    </source>
</evidence>
<evidence type="ECO:0000269" key="8">
    <source>
    </source>
</evidence>
<evidence type="ECO:0000269" key="9">
    <source>
    </source>
</evidence>
<evidence type="ECO:0000269" key="10">
    <source>
    </source>
</evidence>
<evidence type="ECO:0000269" key="11">
    <source>
    </source>
</evidence>
<evidence type="ECO:0000269" key="12">
    <source>
    </source>
</evidence>
<evidence type="ECO:0000269" key="13">
    <source>
    </source>
</evidence>
<evidence type="ECO:0000269" key="14">
    <source>
    </source>
</evidence>
<evidence type="ECO:0000269" key="15">
    <source>
    </source>
</evidence>
<evidence type="ECO:0000269" key="16">
    <source>
    </source>
</evidence>
<evidence type="ECO:0000269" key="17">
    <source>
    </source>
</evidence>
<evidence type="ECO:0000269" key="18">
    <source>
    </source>
</evidence>
<evidence type="ECO:0000269" key="19">
    <source>
    </source>
</evidence>
<evidence type="ECO:0000269" key="20">
    <source>
    </source>
</evidence>
<evidence type="ECO:0000269" key="21">
    <source>
    </source>
</evidence>
<evidence type="ECO:0000269" key="22">
    <source>
    </source>
</evidence>
<evidence type="ECO:0000269" key="23">
    <source>
    </source>
</evidence>
<evidence type="ECO:0000269" key="24">
    <source>
    </source>
</evidence>
<evidence type="ECO:0000269" key="25">
    <source>
    </source>
</evidence>
<evidence type="ECO:0000269" key="26">
    <source>
    </source>
</evidence>
<evidence type="ECO:0000303" key="27">
    <source>
    </source>
</evidence>
<evidence type="ECO:0000303" key="28">
    <source>
    </source>
</evidence>
<evidence type="ECO:0000303" key="29">
    <source>
    </source>
</evidence>
<evidence type="ECO:0000303" key="30">
    <source>
    </source>
</evidence>
<evidence type="ECO:0000303" key="31">
    <source>
    </source>
</evidence>
<evidence type="ECO:0000303" key="32">
    <source>
    </source>
</evidence>
<evidence type="ECO:0000303" key="33">
    <source>
    </source>
</evidence>
<evidence type="ECO:0000305" key="34"/>
<evidence type="ECO:0007744" key="35">
    <source>
        <dbReference type="PDB" id="6A3Z"/>
    </source>
</evidence>
<evidence type="ECO:0007744" key="36">
    <source>
    </source>
</evidence>
<evidence type="ECO:0007744" key="37">
    <source>
    </source>
</evidence>
<evidence type="ECO:0007744" key="38">
    <source>
    </source>
</evidence>
<evidence type="ECO:0007829" key="39">
    <source>
        <dbReference type="PDB" id="6A3Z"/>
    </source>
</evidence>
<dbReference type="EC" id="2.3.2.27" evidence="6 7 8 13 14 15"/>
<dbReference type="EMBL" id="AB085847">
    <property type="protein sequence ID" value="BAC24801.1"/>
    <property type="molecule type" value="mRNA"/>
</dbReference>
<dbReference type="EMBL" id="AB024690">
    <property type="protein sequence ID" value="BAC57449.1"/>
    <property type="molecule type" value="mRNA"/>
</dbReference>
<dbReference type="EMBL" id="AF317634">
    <property type="protein sequence ID" value="AAL26903.1"/>
    <property type="molecule type" value="mRNA"/>
</dbReference>
<dbReference type="EMBL" id="AB058713">
    <property type="protein sequence ID" value="BAB47439.1"/>
    <property type="status" value="ALT_INIT"/>
    <property type="molecule type" value="mRNA"/>
</dbReference>
<dbReference type="EMBL" id="AL834262">
    <property type="protein sequence ID" value="CAD38937.1"/>
    <property type="molecule type" value="mRNA"/>
</dbReference>
<dbReference type="EMBL" id="BC030530">
    <property type="protein sequence ID" value="AAH30530.1"/>
    <property type="molecule type" value="mRNA"/>
</dbReference>
<dbReference type="CCDS" id="CCDS31605.1">
    <molecule id="Q86TM6-1"/>
</dbReference>
<dbReference type="CCDS" id="CCDS8097.1">
    <molecule id="Q86TM6-3"/>
</dbReference>
<dbReference type="RefSeq" id="NP_115807.1">
    <molecule id="Q86TM6-3"/>
    <property type="nucleotide sequence ID" value="NM_032431.3"/>
</dbReference>
<dbReference type="RefSeq" id="NP_757385.1">
    <molecule id="Q86TM6-1"/>
    <property type="nucleotide sequence ID" value="NM_172230.3"/>
</dbReference>
<dbReference type="RefSeq" id="XP_011543605.1">
    <molecule id="Q86TM6-1"/>
    <property type="nucleotide sequence ID" value="XM_011545303.4"/>
</dbReference>
<dbReference type="RefSeq" id="XP_047283669.1">
    <molecule id="Q86TM6-3"/>
    <property type="nucleotide sequence ID" value="XM_047427713.1"/>
</dbReference>
<dbReference type="RefSeq" id="XP_054226167.1">
    <molecule id="Q86TM6-1"/>
    <property type="nucleotide sequence ID" value="XM_054370192.1"/>
</dbReference>
<dbReference type="RefSeq" id="XP_054226168.1">
    <molecule id="Q86TM6-3"/>
    <property type="nucleotide sequence ID" value="XM_054370193.1"/>
</dbReference>
<dbReference type="PDB" id="6A3Z">
    <property type="method" value="NMR"/>
    <property type="chains" value="A=279-334"/>
</dbReference>
<dbReference type="PDB" id="8KES">
    <property type="method" value="EM"/>
    <property type="resolution" value="3.50 A"/>
    <property type="chains" value="A/B=1-617"/>
</dbReference>
<dbReference type="PDB" id="8KET">
    <property type="method" value="EM"/>
    <property type="resolution" value="3.30 A"/>
    <property type="chains" value="A/B=1-617"/>
</dbReference>
<dbReference type="PDB" id="8KEV">
    <property type="method" value="EM"/>
    <property type="resolution" value="3.50 A"/>
    <property type="chains" value="A/B=1-617"/>
</dbReference>
<dbReference type="PDBsum" id="6A3Z"/>
<dbReference type="PDBsum" id="8KES"/>
<dbReference type="PDBsum" id="8KET"/>
<dbReference type="PDBsum" id="8KEV"/>
<dbReference type="EMDB" id="EMD-37166"/>
<dbReference type="EMDB" id="EMD-37167"/>
<dbReference type="EMDB" id="EMD-37168"/>
<dbReference type="SMR" id="Q86TM6"/>
<dbReference type="BioGRID" id="124085">
    <property type="interactions" value="363"/>
</dbReference>
<dbReference type="CORUM" id="Q86TM6"/>
<dbReference type="DIP" id="DIP-43982N"/>
<dbReference type="FunCoup" id="Q86TM6">
    <property type="interactions" value="2164"/>
</dbReference>
<dbReference type="IntAct" id="Q86TM6">
    <property type="interactions" value="103"/>
</dbReference>
<dbReference type="MINT" id="Q86TM6"/>
<dbReference type="STRING" id="9606.ENSP00000366395"/>
<dbReference type="TCDB" id="3.A.16.1.4">
    <property type="family name" value="the endoplasmic reticular retrotranslocon (er-rt) family"/>
</dbReference>
<dbReference type="GlyGen" id="Q86TM6">
    <property type="glycosylation" value="4 sites, 1 O-linked glycan (2 sites)"/>
</dbReference>
<dbReference type="iPTMnet" id="Q86TM6"/>
<dbReference type="PhosphoSitePlus" id="Q86TM6"/>
<dbReference type="SwissPalm" id="Q86TM6"/>
<dbReference type="BioMuta" id="SYVN1"/>
<dbReference type="DMDM" id="134035039"/>
<dbReference type="jPOST" id="Q86TM6"/>
<dbReference type="MassIVE" id="Q86TM6"/>
<dbReference type="PaxDb" id="9606-ENSP00000366395"/>
<dbReference type="PeptideAtlas" id="Q86TM6"/>
<dbReference type="ProteomicsDB" id="69713">
    <molecule id="Q86TM6-1"/>
</dbReference>
<dbReference type="ProteomicsDB" id="69714">
    <molecule id="Q86TM6-2"/>
</dbReference>
<dbReference type="ProteomicsDB" id="69715">
    <molecule id="Q86TM6-3"/>
</dbReference>
<dbReference type="Pumba" id="Q86TM6"/>
<dbReference type="Antibodypedia" id="1694">
    <property type="antibodies" value="390 antibodies from 36 providers"/>
</dbReference>
<dbReference type="DNASU" id="84447"/>
<dbReference type="Ensembl" id="ENST00000294256.12">
    <molecule id="Q86TM6-3"/>
    <property type="protein sequence ID" value="ENSP00000294256.8"/>
    <property type="gene ID" value="ENSG00000162298.19"/>
</dbReference>
<dbReference type="Ensembl" id="ENST00000307289.10">
    <molecule id="Q86TM6-2"/>
    <property type="protein sequence ID" value="ENSP00000302035.6"/>
    <property type="gene ID" value="ENSG00000162298.19"/>
</dbReference>
<dbReference type="Ensembl" id="ENST00000377190.8">
    <molecule id="Q86TM6-1"/>
    <property type="protein sequence ID" value="ENSP00000366395.3"/>
    <property type="gene ID" value="ENSG00000162298.19"/>
</dbReference>
<dbReference type="Ensembl" id="ENST00000526060.5">
    <molecule id="Q86TM6-3"/>
    <property type="protein sequence ID" value="ENSP00000436984.1"/>
    <property type="gene ID" value="ENSG00000162298.19"/>
</dbReference>
<dbReference type="GeneID" id="84447"/>
<dbReference type="KEGG" id="hsa:84447"/>
<dbReference type="MANE-Select" id="ENST00000377190.8">
    <property type="protein sequence ID" value="ENSP00000366395.3"/>
    <property type="RefSeq nucleotide sequence ID" value="NM_172230.3"/>
    <property type="RefSeq protein sequence ID" value="NP_757385.1"/>
</dbReference>
<dbReference type="UCSC" id="uc001odb.4">
    <molecule id="Q86TM6-1"/>
    <property type="organism name" value="human"/>
</dbReference>
<dbReference type="AGR" id="HGNC:20738"/>
<dbReference type="CTD" id="84447"/>
<dbReference type="DisGeNET" id="84447"/>
<dbReference type="GeneCards" id="SYVN1"/>
<dbReference type="HGNC" id="HGNC:20738">
    <property type="gene designation" value="SYVN1"/>
</dbReference>
<dbReference type="HPA" id="ENSG00000162298">
    <property type="expression patterns" value="Low tissue specificity"/>
</dbReference>
<dbReference type="MIM" id="608046">
    <property type="type" value="gene"/>
</dbReference>
<dbReference type="neXtProt" id="NX_Q86TM6"/>
<dbReference type="OpenTargets" id="ENSG00000162298"/>
<dbReference type="PharmGKB" id="PA128394735"/>
<dbReference type="VEuPathDB" id="HostDB:ENSG00000162298"/>
<dbReference type="eggNOG" id="KOG0802">
    <property type="taxonomic scope" value="Eukaryota"/>
</dbReference>
<dbReference type="GeneTree" id="ENSGT00940000157743"/>
<dbReference type="HOGENOM" id="CLU_009169_3_0_1"/>
<dbReference type="InParanoid" id="Q86TM6"/>
<dbReference type="OMA" id="PGMGAPF"/>
<dbReference type="OrthoDB" id="7759664at2759"/>
<dbReference type="PAN-GO" id="Q86TM6">
    <property type="GO annotations" value="3 GO annotations based on evolutionary models"/>
</dbReference>
<dbReference type="PhylomeDB" id="Q86TM6"/>
<dbReference type="TreeFam" id="TF318635"/>
<dbReference type="PathwayCommons" id="Q86TM6"/>
<dbReference type="Reactome" id="R-HSA-381038">
    <property type="pathway name" value="XBP1(S) activates chaperone genes"/>
</dbReference>
<dbReference type="Reactome" id="R-HSA-5358346">
    <property type="pathway name" value="Hedgehog ligand biogenesis"/>
</dbReference>
<dbReference type="Reactome" id="R-HSA-5362768">
    <property type="pathway name" value="Hh mutants are degraded by ERAD"/>
</dbReference>
<dbReference type="Reactome" id="R-HSA-901032">
    <property type="pathway name" value="ER Quality Control Compartment (ERQC)"/>
</dbReference>
<dbReference type="SignaLink" id="Q86TM6"/>
<dbReference type="SIGNOR" id="Q86TM6"/>
<dbReference type="UniPathway" id="UPA00143"/>
<dbReference type="BioGRID-ORCS" id="84447">
    <property type="hits" value="239 hits in 1216 CRISPR screens"/>
</dbReference>
<dbReference type="ChiTaRS" id="SYVN1">
    <property type="organism name" value="human"/>
</dbReference>
<dbReference type="GeneWiki" id="SYVN1"/>
<dbReference type="GenomeRNAi" id="84447"/>
<dbReference type="Pharos" id="Q86TM6">
    <property type="development level" value="Tbio"/>
</dbReference>
<dbReference type="PRO" id="PR:Q86TM6"/>
<dbReference type="Proteomes" id="UP000005640">
    <property type="component" value="Chromosome 11"/>
</dbReference>
<dbReference type="RNAct" id="Q86TM6">
    <property type="molecule type" value="protein"/>
</dbReference>
<dbReference type="Bgee" id="ENSG00000162298">
    <property type="expression patterns" value="Expressed in ileal mucosa and 178 other cell types or tissues"/>
</dbReference>
<dbReference type="ExpressionAtlas" id="Q86TM6">
    <property type="expression patterns" value="baseline and differential"/>
</dbReference>
<dbReference type="GO" id="GO:0036513">
    <property type="term" value="C:Derlin-1 retrotranslocation complex"/>
    <property type="evidence" value="ECO:0000314"/>
    <property type="project" value="ParkinsonsUK-UCL"/>
</dbReference>
<dbReference type="GO" id="GO:0012505">
    <property type="term" value="C:endomembrane system"/>
    <property type="evidence" value="ECO:0000318"/>
    <property type="project" value="GO_Central"/>
</dbReference>
<dbReference type="GO" id="GO:0005783">
    <property type="term" value="C:endoplasmic reticulum"/>
    <property type="evidence" value="ECO:0000314"/>
    <property type="project" value="HPA"/>
</dbReference>
<dbReference type="GO" id="GO:0005789">
    <property type="term" value="C:endoplasmic reticulum membrane"/>
    <property type="evidence" value="ECO:0000304"/>
    <property type="project" value="Reactome"/>
</dbReference>
<dbReference type="GO" id="GO:0044322">
    <property type="term" value="C:endoplasmic reticulum quality control compartment"/>
    <property type="evidence" value="ECO:0000314"/>
    <property type="project" value="UniProtKB"/>
</dbReference>
<dbReference type="GO" id="GO:0000836">
    <property type="term" value="C:Hrd1p ubiquitin ligase complex"/>
    <property type="evidence" value="ECO:0000314"/>
    <property type="project" value="UniProtKB"/>
</dbReference>
<dbReference type="GO" id="GO:0000839">
    <property type="term" value="C:Hrd1p ubiquitin ligase ERAD-L complex"/>
    <property type="evidence" value="ECO:0000314"/>
    <property type="project" value="UniProtKB"/>
</dbReference>
<dbReference type="GO" id="GO:0016020">
    <property type="term" value="C:membrane"/>
    <property type="evidence" value="ECO:0007005"/>
    <property type="project" value="UniProtKB"/>
</dbReference>
<dbReference type="GO" id="GO:0005654">
    <property type="term" value="C:nucleoplasm"/>
    <property type="evidence" value="ECO:0000314"/>
    <property type="project" value="HPA"/>
</dbReference>
<dbReference type="GO" id="GO:0005790">
    <property type="term" value="C:smooth endoplasmic reticulum"/>
    <property type="evidence" value="ECO:0000314"/>
    <property type="project" value="ParkinsonsUK-UCL"/>
</dbReference>
<dbReference type="GO" id="GO:0051117">
    <property type="term" value="F:ATPase binding"/>
    <property type="evidence" value="ECO:0000353"/>
    <property type="project" value="ParkinsonsUK-UCL"/>
</dbReference>
<dbReference type="GO" id="GO:0140297">
    <property type="term" value="F:DNA-binding transcription factor binding"/>
    <property type="evidence" value="ECO:0007669"/>
    <property type="project" value="Ensembl"/>
</dbReference>
<dbReference type="GO" id="GO:0051087">
    <property type="term" value="F:protein-folding chaperone binding"/>
    <property type="evidence" value="ECO:0000353"/>
    <property type="project" value="ParkinsonsUK-UCL"/>
</dbReference>
<dbReference type="GO" id="GO:0061630">
    <property type="term" value="F:ubiquitin protein ligase activity"/>
    <property type="evidence" value="ECO:0000314"/>
    <property type="project" value="ParkinsonsUK-UCL"/>
</dbReference>
<dbReference type="GO" id="GO:1990381">
    <property type="term" value="F:ubiquitin-specific protease binding"/>
    <property type="evidence" value="ECO:0000353"/>
    <property type="project" value="ParkinsonsUK-UCL"/>
</dbReference>
<dbReference type="GO" id="GO:0051082">
    <property type="term" value="F:unfolded protein binding"/>
    <property type="evidence" value="ECO:0000353"/>
    <property type="project" value="ParkinsonsUK-UCL"/>
</dbReference>
<dbReference type="GO" id="GO:0008270">
    <property type="term" value="F:zinc ion binding"/>
    <property type="evidence" value="ECO:0007669"/>
    <property type="project" value="UniProtKB-KW"/>
</dbReference>
<dbReference type="GO" id="GO:1904380">
    <property type="term" value="P:endoplasmic reticulum mannose trimming"/>
    <property type="evidence" value="ECO:0000304"/>
    <property type="project" value="Reactome"/>
</dbReference>
<dbReference type="GO" id="GO:0036503">
    <property type="term" value="P:ERAD pathway"/>
    <property type="evidence" value="ECO:0000314"/>
    <property type="project" value="UniProtKB"/>
</dbReference>
<dbReference type="GO" id="GO:0002327">
    <property type="term" value="P:immature B cell differentiation"/>
    <property type="evidence" value="ECO:0000250"/>
    <property type="project" value="UniProtKB"/>
</dbReference>
<dbReference type="GO" id="GO:1902236">
    <property type="term" value="P:negative regulation of endoplasmic reticulum stress-induced intrinsic apoptotic signaling pathway"/>
    <property type="evidence" value="ECO:0000314"/>
    <property type="project" value="ParkinsonsUK-UCL"/>
</dbReference>
<dbReference type="GO" id="GO:0043161">
    <property type="term" value="P:proteasome-mediated ubiquitin-dependent protein catabolic process"/>
    <property type="evidence" value="ECO:0000318"/>
    <property type="project" value="GO_Central"/>
</dbReference>
<dbReference type="GO" id="GO:0070936">
    <property type="term" value="P:protein K48-linked ubiquitination"/>
    <property type="evidence" value="ECO:0000314"/>
    <property type="project" value="ParkinsonsUK-UCL"/>
</dbReference>
<dbReference type="GO" id="GO:0050821">
    <property type="term" value="P:protein stabilization"/>
    <property type="evidence" value="ECO:0000315"/>
    <property type="project" value="ParkinsonsUK-UCL"/>
</dbReference>
<dbReference type="GO" id="GO:0016567">
    <property type="term" value="P:protein ubiquitination"/>
    <property type="evidence" value="ECO:0000314"/>
    <property type="project" value="ParkinsonsUK-UCL"/>
</dbReference>
<dbReference type="GO" id="GO:0030970">
    <property type="term" value="P:retrograde protein transport, ER to cytosol"/>
    <property type="evidence" value="ECO:0000315"/>
    <property type="project" value="ParkinsonsUK-UCL"/>
</dbReference>
<dbReference type="GO" id="GO:0006511">
    <property type="term" value="P:ubiquitin-dependent protein catabolic process"/>
    <property type="evidence" value="ECO:0000314"/>
    <property type="project" value="ParkinsonsUK-UCL"/>
</dbReference>
<dbReference type="CDD" id="cd16479">
    <property type="entry name" value="RING-H2_synoviolin"/>
    <property type="match status" value="1"/>
</dbReference>
<dbReference type="FunFam" id="3.30.40.10:FF:000088">
    <property type="entry name" value="E3 ubiquitin-protein ligase synoviolin"/>
    <property type="match status" value="1"/>
</dbReference>
<dbReference type="Gene3D" id="3.30.40.10">
    <property type="entry name" value="Zinc/RING finger domain, C3HC4 (zinc finger)"/>
    <property type="match status" value="1"/>
</dbReference>
<dbReference type="InterPro" id="IPR050731">
    <property type="entry name" value="HRD1_E3_ubiq-ligases"/>
</dbReference>
<dbReference type="InterPro" id="IPR001841">
    <property type="entry name" value="Znf_RING"/>
</dbReference>
<dbReference type="InterPro" id="IPR013083">
    <property type="entry name" value="Znf_RING/FYVE/PHD"/>
</dbReference>
<dbReference type="PANTHER" id="PTHR22763:SF184">
    <property type="entry name" value="E3 UBIQUITIN-PROTEIN LIGASE SYNOVIOLIN"/>
    <property type="match status" value="1"/>
</dbReference>
<dbReference type="PANTHER" id="PTHR22763">
    <property type="entry name" value="RING ZINC FINGER PROTEIN"/>
    <property type="match status" value="1"/>
</dbReference>
<dbReference type="Pfam" id="PF13639">
    <property type="entry name" value="zf-RING_2"/>
    <property type="match status" value="1"/>
</dbReference>
<dbReference type="PRINTS" id="PR01217">
    <property type="entry name" value="PRICHEXTENSN"/>
</dbReference>
<dbReference type="SMART" id="SM00184">
    <property type="entry name" value="RING"/>
    <property type="match status" value="1"/>
</dbReference>
<dbReference type="SUPFAM" id="SSF57850">
    <property type="entry name" value="RING/U-box"/>
    <property type="match status" value="1"/>
</dbReference>
<dbReference type="PROSITE" id="PS50089">
    <property type="entry name" value="ZF_RING_2"/>
    <property type="match status" value="1"/>
</dbReference>
<comment type="function">
    <text evidence="1 5 6 7 8 11 12 13 14 15 20 21 22 23 24">E3 ubiquitin-protein ligase which accepts ubiquitin specifically from endoplasmic reticulum-associated UBC7 E2 ligase and transfers it to substrates, promoting their degradation (PubMed:12459480, PubMed:12646171, PubMed:12975321, PubMed:14593114, PubMed:16289116, PubMed:16847254, PubMed:17059562, PubMed:17141218, PubMed:17170702, PubMed:22607976, PubMed:27827840, PubMed:26471130, PubMed:28827405). Component of the endoplasmic reticulum quality control (ERQC) system also called ER-associated degradation (ERAD) involved in ubiquitin-dependent degradation of misfolded endoplasmic reticulum proteins (PubMed:12459480, PubMed:12646171, PubMed:12975321, PubMed:14593114, PubMed:16289116, PubMed:16847254, PubMed:17059562, PubMed:17141218, PubMed:17170702, PubMed:22607976, PubMed:26471130, PubMed:28842558). Also promotes the degradation of normal but naturally short-lived proteins such as SGK. Protects cells from ER stress-induced apoptosis. Protects neurons from apoptosis induced by polyglutamine-expanded huntingtin (HTT) or unfolded GPR37 by promoting their degradation (PubMed:17141218). Sequesters p53/TP53 in the cytoplasm and promotes its degradation, thereby negatively regulating its biological function in transcription, cell cycle regulation and apoptosis (PubMed:17170702). Mediates the ubiquitination and subsequent degradation of cytoplasmic NFE2L1 (By similarity). During the early stage of B cell development, required for degradation of the pre-B cell receptor (pre-BCR) complex, hence supporting further differentiation into mature B cells (By similarity).</text>
</comment>
<comment type="catalytic activity">
    <reaction evidence="6 7 8 13 14 15">
        <text>S-ubiquitinyl-[E2 ubiquitin-conjugating enzyme]-L-cysteine + [acceptor protein]-L-lysine = [E2 ubiquitin-conjugating enzyme]-L-cysteine + N(6)-ubiquitinyl-[acceptor protein]-L-lysine.</text>
        <dbReference type="EC" id="2.3.2.27"/>
    </reaction>
</comment>
<comment type="pathway">
    <text evidence="5 11 12 13 20 21">Protein modification; protein ubiquitination.</text>
</comment>
<comment type="subunit">
    <text evidence="1 9 10 11 14 15 16 17 18 19 21 23 26">Homodimer (PubMed:16289116). Interacts with p53/TP53 (PubMed:17170702). Interacts with HTT (PubMed:17141218). Component of the HRD1 complex, which comprises at least SYNV1/HRD1, DERL1/2, FAM8A1, HERPUD1/HERP, OS9, SEL1L and UBE2J1 (PubMed:16186509, PubMed:16289116, PubMed:18264092, PubMed:26471130, PubMed:28827405, PubMed:37943610). FAM8A1 is stabilized by interaction with SYNV1, which prevents its proteasomal degradation. OS9 and UBE2J1 recruitment to the complex may be mediated by SEL1L (PubMed:28827405). SYNV1 assembles with SEL1L and FAM8A1 through its transmembrane domains, but interaction with its cytoplasmic domain is required to confer stability to FAM8A1 and enhance recruitment of HERPUD1 (PubMed:28827405). The HRD1 complex also associates with VIMP and may transfer misfolded proteins from the endoplasmic reticulum to VCP (PubMed:16289116). May form a complex with ERLEC1, HSPA5, OS9 and SEL1L (PubMed:18264092, PubMed:18502753). Interacts with VCP (PubMed:16186510, PubMed:16289116). Interacts with UBXN6 (PubMed:18656546). Interacts with BAG6 (PubMed:21636303). Interacts with NFE2L1 (By similarity). Interacts (via N-terminus) with components of the pre-B cell receptor, including IGLL1 and VPREB1 (By similarity). Interacts with CREB3L3; this interaction leads to CREB3L3 ubiquitination and proteasomal degradation (By similarity).</text>
</comment>
<comment type="interaction">
    <interactant intactId="EBI-947849">
        <id>Q86TM6</id>
    </interactant>
    <interactant intactId="EBI-359299">
        <id>O75477</id>
        <label>ERLIN1</label>
    </interactant>
    <organismsDiffer>false</organismsDiffer>
    <experiments>2</experiments>
</comment>
<comment type="interaction">
    <interactant intactId="EBI-947849">
        <id>Q86TM6</id>
    </interactant>
    <interactant intactId="EBI-4400770">
        <id>O94905</id>
        <label>ERLIN2</label>
    </interactant>
    <organismsDiffer>false</organismsDiffer>
    <experiments>2</experiments>
</comment>
<comment type="interaction">
    <interactant intactId="EBI-947849">
        <id>Q86TM6</id>
    </interactant>
    <interactant intactId="EBI-371750">
        <id>O75460</id>
        <label>ERN1</label>
    </interactant>
    <organismsDiffer>false</organismsDiffer>
    <experiments>2</experiments>
</comment>
<comment type="interaction">
    <interactant intactId="EBI-947849">
        <id>Q86TM6</id>
    </interactant>
    <interactant intactId="EBI-15600828">
        <id>O75460-1</id>
        <label>ERN1</label>
    </interactant>
    <organismsDiffer>false</organismsDiffer>
    <experiments>3</experiments>
</comment>
<comment type="interaction">
    <interactant intactId="EBI-947849">
        <id>Q86TM6</id>
    </interactant>
    <interactant intactId="EBI-6309101">
        <id>Q9UBU6</id>
        <label>FAM8A1</label>
    </interactant>
    <organismsDiffer>false</organismsDiffer>
    <experiments>22</experiments>
</comment>
<comment type="interaction">
    <interactant intactId="EBI-947849">
        <id>Q86TM6</id>
    </interactant>
    <interactant intactId="EBI-358766">
        <id>Q9UBV2</id>
        <label>SEL1L</label>
    </interactant>
    <organismsDiffer>false</organismsDiffer>
    <experiments>21</experiments>
</comment>
<comment type="interaction">
    <interactant intactId="EBI-947849">
        <id>Q86TM6</id>
    </interactant>
    <interactant intactId="EBI-366083">
        <id>P04637</id>
        <label>TP53</label>
    </interactant>
    <organismsDiffer>false</organismsDiffer>
    <experiments>5</experiments>
</comment>
<comment type="interaction">
    <interactant intactId="EBI-947849">
        <id>Q86TM6</id>
    </interactant>
    <interactant intactId="EBI-988826">
        <id>Q9Y385</id>
        <label>UBE2J1</label>
    </interactant>
    <organismsDiffer>false</organismsDiffer>
    <experiments>15</experiments>
</comment>
<comment type="interaction">
    <interactant intactId="EBI-947849">
        <id>Q86TM6</id>
    </interactant>
    <interactant intactId="EBI-1043104">
        <id>Q9Y4E8</id>
        <label>USP15</label>
    </interactant>
    <organismsDiffer>false</organismsDiffer>
    <experiments>8</experiments>
</comment>
<comment type="subcellular location">
    <subcellularLocation>
        <location evidence="5 6 8 10 21">Endoplasmic reticulum membrane</location>
        <topology evidence="5 6 8 10">Multi-pass membrane protein</topology>
    </subcellularLocation>
</comment>
<comment type="alternative products">
    <event type="alternative splicing"/>
    <isoform>
        <id>Q86TM6-1</id>
        <name>1</name>
        <name>b</name>
        <name>long</name>
        <sequence type="displayed"/>
    </isoform>
    <isoform>
        <id>Q86TM6-2</id>
        <name>2</name>
        <sequence type="described" ref="VSP_023777 VSP_023778"/>
    </isoform>
    <isoform>
        <id>Q86TM6-3</id>
        <name>3</name>
        <name>a</name>
        <name>short</name>
        <sequence type="described" ref="VSP_023778"/>
    </isoform>
</comment>
<comment type="tissue specificity">
    <text evidence="5 6 7">Ubiquitously expressed, with highest levels in liver and kidney (at protein level). Up-regulated in synovial tissues from patients with rheumatoid arthritis (at protein level).</text>
</comment>
<comment type="induction">
    <text evidence="5 8">By endoplasmic reticulum stress-inducing agents such as thapsigargin, tunicamycin or brefeldin A, but not by heat shock.</text>
</comment>
<comment type="domain">
    <text>The RING-type zinc finger is required for E3 ligase activity.</text>
</comment>
<comment type="PTM">
    <text>Not N-glycosylated.</text>
</comment>
<comment type="PTM">
    <text evidence="5 6 7 22">Auto-ubiquitinated. Deubiquitinated by USP19 (PubMed:27827840).</text>
</comment>
<comment type="disease">
    <text evidence="24">In certain aggressive cases of activated B cell-like diffuse large B-cell lymphoma (ABC-DLBCL), plays a role in the degradation of misfolded N-terminal mutated PRDM1 proteins.</text>
</comment>
<comment type="similarity">
    <text evidence="34">Belongs to the HRD1 family.</text>
</comment>
<comment type="sequence caution" evidence="34">
    <conflict type="erroneous initiation">
        <sequence resource="EMBL-CDS" id="BAB47439"/>
    </conflict>
    <text>Extended N-terminus.</text>
</comment>
<proteinExistence type="evidence at protein level"/>